<protein>
    <recommendedName>
        <fullName>RNA polymerase I-specific transcription initiation factor RRN6</fullName>
    </recommendedName>
</protein>
<evidence type="ECO:0000256" key="1">
    <source>
        <dbReference type="SAM" id="MobiDB-lite"/>
    </source>
</evidence>
<evidence type="ECO:0000269" key="2">
    <source>
    </source>
</evidence>
<evidence type="ECO:0000269" key="3">
    <source>
    </source>
</evidence>
<evidence type="ECO:0000269" key="4">
    <source>
    </source>
</evidence>
<evidence type="ECO:0000269" key="5">
    <source>
    </source>
</evidence>
<evidence type="ECO:0000269" key="6">
    <source>
    </source>
</evidence>
<evidence type="ECO:0000269" key="7">
    <source>
    </source>
</evidence>
<evidence type="ECO:0000305" key="8"/>
<evidence type="ECO:0007829" key="9">
    <source>
        <dbReference type="PDB" id="5N61"/>
    </source>
</evidence>
<evidence type="ECO:0007829" key="10">
    <source>
        <dbReference type="PDB" id="5O7X"/>
    </source>
</evidence>
<evidence type="ECO:0007829" key="11">
    <source>
        <dbReference type="PDB" id="6RQL"/>
    </source>
</evidence>
<evidence type="ECO:0007829" key="12">
    <source>
        <dbReference type="PDB" id="6RUI"/>
    </source>
</evidence>
<evidence type="ECO:0007829" key="13">
    <source>
        <dbReference type="PDB" id="6RWE"/>
    </source>
</evidence>
<dbReference type="EMBL" id="L33863">
    <property type="protein sequence ID" value="AAA53130.1"/>
    <property type="molecule type" value="Genomic_DNA"/>
</dbReference>
<dbReference type="EMBL" id="Z35775">
    <property type="protein sequence ID" value="CAA84833.1"/>
    <property type="molecule type" value="Genomic_DNA"/>
</dbReference>
<dbReference type="EMBL" id="BK006936">
    <property type="protein sequence ID" value="DAA07106.2"/>
    <property type="molecule type" value="Genomic_DNA"/>
</dbReference>
<dbReference type="PIR" id="S25332">
    <property type="entry name" value="S25332"/>
</dbReference>
<dbReference type="RefSeq" id="NP_009539.2">
    <property type="nucleotide sequence ID" value="NM_001178254.2"/>
</dbReference>
<dbReference type="PDB" id="5N5Y">
    <property type="method" value="EM"/>
    <property type="resolution" value="7.70 A"/>
    <property type="chains" value="P=1-894"/>
</dbReference>
<dbReference type="PDB" id="5N5Z">
    <property type="method" value="EM"/>
    <property type="resolution" value="7.70 A"/>
    <property type="chains" value="P=1-894"/>
</dbReference>
<dbReference type="PDB" id="5N60">
    <property type="method" value="EM"/>
    <property type="resolution" value="7.70 A"/>
    <property type="chains" value="P=1-894"/>
</dbReference>
<dbReference type="PDB" id="5N61">
    <property type="method" value="EM"/>
    <property type="resolution" value="3.40 A"/>
    <property type="chains" value="P=1-894"/>
</dbReference>
<dbReference type="PDB" id="5O7X">
    <property type="method" value="X-ray"/>
    <property type="resolution" value="3.20 A"/>
    <property type="chains" value="A/D/G/J/M/P=1-894"/>
</dbReference>
<dbReference type="PDB" id="5OA1">
    <property type="method" value="EM"/>
    <property type="resolution" value="4.40 A"/>
    <property type="chains" value="V=1-894"/>
</dbReference>
<dbReference type="PDB" id="5W5Y">
    <property type="method" value="EM"/>
    <property type="resolution" value="3.80 A"/>
    <property type="chains" value="O=1-894"/>
</dbReference>
<dbReference type="PDB" id="5W64">
    <property type="method" value="EM"/>
    <property type="resolution" value="4.20 A"/>
    <property type="chains" value="O=1-894"/>
</dbReference>
<dbReference type="PDB" id="5W65">
    <property type="method" value="EM"/>
    <property type="resolution" value="4.30 A"/>
    <property type="chains" value="O=1-894"/>
</dbReference>
<dbReference type="PDB" id="5W66">
    <property type="method" value="EM"/>
    <property type="resolution" value="3.90 A"/>
    <property type="chains" value="O=1-894"/>
</dbReference>
<dbReference type="PDB" id="6RQH">
    <property type="method" value="EM"/>
    <property type="resolution" value="3.70 A"/>
    <property type="chains" value="S=1-894"/>
</dbReference>
<dbReference type="PDB" id="6RQL">
    <property type="method" value="EM"/>
    <property type="resolution" value="2.90 A"/>
    <property type="chains" value="S=1-894"/>
</dbReference>
<dbReference type="PDB" id="6RRD">
    <property type="method" value="EM"/>
    <property type="resolution" value="3.10 A"/>
    <property type="chains" value="S=1-894"/>
</dbReference>
<dbReference type="PDB" id="6RUI">
    <property type="method" value="EM"/>
    <property type="resolution" value="2.70 A"/>
    <property type="chains" value="S=1-894"/>
</dbReference>
<dbReference type="PDB" id="6RUO">
    <property type="method" value="EM"/>
    <property type="resolution" value="3.50 A"/>
    <property type="chains" value="S=1-894"/>
</dbReference>
<dbReference type="PDB" id="6RWE">
    <property type="method" value="EM"/>
    <property type="resolution" value="3.00 A"/>
    <property type="chains" value="S=1-894"/>
</dbReference>
<dbReference type="PDB" id="6TPS">
    <property type="method" value="EM"/>
    <property type="resolution" value="3.54 A"/>
    <property type="chains" value="P=169-779"/>
</dbReference>
<dbReference type="PDBsum" id="5N5Y"/>
<dbReference type="PDBsum" id="5N5Z"/>
<dbReference type="PDBsum" id="5N60"/>
<dbReference type="PDBsum" id="5N61"/>
<dbReference type="PDBsum" id="5O7X"/>
<dbReference type="PDBsum" id="5OA1"/>
<dbReference type="PDBsum" id="5W5Y"/>
<dbReference type="PDBsum" id="5W64"/>
<dbReference type="PDBsum" id="5W65"/>
<dbReference type="PDBsum" id="5W66"/>
<dbReference type="PDBsum" id="6RQH"/>
<dbReference type="PDBsum" id="6RQL"/>
<dbReference type="PDBsum" id="6RRD"/>
<dbReference type="PDBsum" id="6RUI"/>
<dbReference type="PDBsum" id="6RUO"/>
<dbReference type="PDBsum" id="6RWE"/>
<dbReference type="PDBsum" id="6TPS"/>
<dbReference type="EMDB" id="EMD-10006"/>
<dbReference type="EMDB" id="EMD-10007"/>
<dbReference type="EMDB" id="EMD-10038"/>
<dbReference type="EMDB" id="EMD-10544"/>
<dbReference type="EMDB" id="EMD-3590"/>
<dbReference type="EMDB" id="EMD-3591"/>
<dbReference type="EMDB" id="EMD-3592"/>
<dbReference type="EMDB" id="EMD-3593"/>
<dbReference type="EMDB" id="EMD-3727"/>
<dbReference type="EMDB" id="EMD-4982"/>
<dbReference type="EMDB" id="EMD-4984"/>
<dbReference type="EMDB" id="EMD-4987"/>
<dbReference type="EMDB" id="EMD-8771"/>
<dbReference type="EMDB" id="EMD-8772"/>
<dbReference type="EMDB" id="EMD-8774"/>
<dbReference type="EMDB" id="EMD-8775"/>
<dbReference type="EMDB" id="EMD-8776"/>
<dbReference type="EMDB" id="EMD-8777"/>
<dbReference type="SMR" id="P32786"/>
<dbReference type="BioGRID" id="32686">
    <property type="interactions" value="25"/>
</dbReference>
<dbReference type="ComplexPortal" id="CPX-1836">
    <property type="entry name" value="RNA polymerase I core factor complex"/>
</dbReference>
<dbReference type="DIP" id="DIP-1595N"/>
<dbReference type="FunCoup" id="P32786">
    <property type="interactions" value="36"/>
</dbReference>
<dbReference type="IntAct" id="P32786">
    <property type="interactions" value="4"/>
</dbReference>
<dbReference type="MINT" id="P32786"/>
<dbReference type="STRING" id="4932.YBL014C"/>
<dbReference type="iPTMnet" id="P32786"/>
<dbReference type="PaxDb" id="4932-YBL014C"/>
<dbReference type="PeptideAtlas" id="P32786"/>
<dbReference type="EnsemblFungi" id="YBL014C_mRNA">
    <property type="protein sequence ID" value="YBL014C"/>
    <property type="gene ID" value="YBL014C"/>
</dbReference>
<dbReference type="GeneID" id="852269"/>
<dbReference type="KEGG" id="sce:YBL014C"/>
<dbReference type="AGR" id="SGD:S000000110"/>
<dbReference type="SGD" id="S000000110">
    <property type="gene designation" value="RRN6"/>
</dbReference>
<dbReference type="VEuPathDB" id="FungiDB:YBL014C"/>
<dbReference type="eggNOG" id="ENOG502QRAW">
    <property type="taxonomic scope" value="Eukaryota"/>
</dbReference>
<dbReference type="HOGENOM" id="CLU_014997_0_0_1"/>
<dbReference type="InParanoid" id="P32786"/>
<dbReference type="OMA" id="PAFTLMQ"/>
<dbReference type="OrthoDB" id="4090074at2759"/>
<dbReference type="BioCyc" id="YEAST:G3O-28919-MONOMER"/>
<dbReference type="BioGRID-ORCS" id="852269">
    <property type="hits" value="2 hits in 10 CRISPR screens"/>
</dbReference>
<dbReference type="PRO" id="PR:P32786"/>
<dbReference type="Proteomes" id="UP000002311">
    <property type="component" value="Chromosome II"/>
</dbReference>
<dbReference type="RNAct" id="P32786">
    <property type="molecule type" value="protein"/>
</dbReference>
<dbReference type="GO" id="GO:0005737">
    <property type="term" value="C:cytoplasm"/>
    <property type="evidence" value="ECO:0007669"/>
    <property type="project" value="UniProtKB-SubCell"/>
</dbReference>
<dbReference type="GO" id="GO:0005634">
    <property type="term" value="C:nucleus"/>
    <property type="evidence" value="ECO:0000303"/>
    <property type="project" value="ComplexPortal"/>
</dbReference>
<dbReference type="GO" id="GO:0070860">
    <property type="term" value="C:RNA polymerase I core factor complex"/>
    <property type="evidence" value="ECO:0000314"/>
    <property type="project" value="SGD"/>
</dbReference>
<dbReference type="GO" id="GO:0001179">
    <property type="term" value="F:RNA polymerase I general transcription initiation factor binding"/>
    <property type="evidence" value="ECO:0000314"/>
    <property type="project" value="SGD"/>
</dbReference>
<dbReference type="GO" id="GO:0001163">
    <property type="term" value="F:RNA polymerase I transcription regulatory region sequence-specific DNA binding"/>
    <property type="evidence" value="ECO:0000314"/>
    <property type="project" value="SGD"/>
</dbReference>
<dbReference type="GO" id="GO:0042790">
    <property type="term" value="P:nucleolar large rRNA transcription by RNA polymerase I"/>
    <property type="evidence" value="ECO:0000314"/>
    <property type="project" value="ComplexPortal"/>
</dbReference>
<dbReference type="GO" id="GO:0006361">
    <property type="term" value="P:transcription initiation at RNA polymerase I promoter"/>
    <property type="evidence" value="ECO:0007669"/>
    <property type="project" value="InterPro"/>
</dbReference>
<dbReference type="InterPro" id="IPR019350">
    <property type="entry name" value="RNA_pol_I-sp_TIF_RRN6-like"/>
</dbReference>
<dbReference type="InterPro" id="IPR016531">
    <property type="entry name" value="Rrn6"/>
</dbReference>
<dbReference type="InterPro" id="IPR048535">
    <property type="entry name" value="RRN6_beta-prop"/>
</dbReference>
<dbReference type="InterPro" id="IPR048537">
    <property type="entry name" value="RRN6_HB"/>
</dbReference>
<dbReference type="InterPro" id="IPR048536">
    <property type="entry name" value="Rrn6_K-rich"/>
</dbReference>
<dbReference type="PANTHER" id="PTHR28221">
    <property type="entry name" value="RNA POLYMERASE I-SPECIFIC TRANSCRIPTION INITIATION FACTOR RRN6"/>
    <property type="match status" value="1"/>
</dbReference>
<dbReference type="PANTHER" id="PTHR28221:SF2">
    <property type="entry name" value="RNA POLYMERASE I-SPECIFIC TRANSCRIPTION INITIATION FACTOR RRN6"/>
    <property type="match status" value="1"/>
</dbReference>
<dbReference type="Pfam" id="PF10214">
    <property type="entry name" value="Rrn6_beta-prop"/>
    <property type="match status" value="1"/>
</dbReference>
<dbReference type="Pfam" id="PF20640">
    <property type="entry name" value="Rrn6_HB"/>
    <property type="match status" value="1"/>
</dbReference>
<dbReference type="Pfam" id="PF20639">
    <property type="entry name" value="Rrn6_K-rich"/>
    <property type="match status" value="1"/>
</dbReference>
<dbReference type="PIRSF" id="PIRSF007939">
    <property type="entry name" value="RNA_pol_I_RRN6"/>
    <property type="match status" value="1"/>
</dbReference>
<feature type="chain" id="PRO_0000097448" description="RNA polymerase I-specific transcription initiation factor RRN6">
    <location>
        <begin position="1"/>
        <end position="894"/>
    </location>
</feature>
<feature type="region of interest" description="Disordered" evidence="1">
    <location>
        <begin position="803"/>
        <end position="894"/>
    </location>
</feature>
<feature type="compositionally biased region" description="Polar residues" evidence="1">
    <location>
        <begin position="806"/>
        <end position="823"/>
    </location>
</feature>
<feature type="compositionally biased region" description="Polar residues" evidence="1">
    <location>
        <begin position="832"/>
        <end position="849"/>
    </location>
</feature>
<feature type="compositionally biased region" description="Polar residues" evidence="1">
    <location>
        <begin position="863"/>
        <end position="880"/>
    </location>
</feature>
<feature type="compositionally biased region" description="Basic residues" evidence="1">
    <location>
        <begin position="881"/>
        <end position="894"/>
    </location>
</feature>
<feature type="sequence conflict" description="In Ref. 2; no nucleotide entry and 3; CAA84833." evidence="8" ref="2 3">
    <original>K</original>
    <variation>N</variation>
    <location>
        <position position="39"/>
    </location>
</feature>
<feature type="sequence conflict" description="In Ref. 1; AAA53130." evidence="8" ref="1">
    <original>L</original>
    <variation>V</variation>
    <location>
        <position position="663"/>
    </location>
</feature>
<feature type="helix" evidence="10">
    <location>
        <begin position="23"/>
        <end position="26"/>
    </location>
</feature>
<feature type="strand" evidence="11">
    <location>
        <begin position="29"/>
        <end position="31"/>
    </location>
</feature>
<feature type="strand" evidence="12">
    <location>
        <begin position="41"/>
        <end position="45"/>
    </location>
</feature>
<feature type="strand" evidence="12">
    <location>
        <begin position="63"/>
        <end position="66"/>
    </location>
</feature>
<feature type="turn" evidence="10">
    <location>
        <begin position="170"/>
        <end position="172"/>
    </location>
</feature>
<feature type="strand" evidence="13">
    <location>
        <begin position="180"/>
        <end position="183"/>
    </location>
</feature>
<feature type="strand" evidence="12">
    <location>
        <begin position="184"/>
        <end position="187"/>
    </location>
</feature>
<feature type="helix" evidence="12">
    <location>
        <begin position="190"/>
        <end position="192"/>
    </location>
</feature>
<feature type="strand" evidence="9">
    <location>
        <begin position="193"/>
        <end position="197"/>
    </location>
</feature>
<feature type="strand" evidence="12">
    <location>
        <begin position="200"/>
        <end position="203"/>
    </location>
</feature>
<feature type="turn" evidence="12">
    <location>
        <begin position="208"/>
        <end position="211"/>
    </location>
</feature>
<feature type="strand" evidence="9">
    <location>
        <begin position="216"/>
        <end position="218"/>
    </location>
</feature>
<feature type="strand" evidence="12">
    <location>
        <begin position="221"/>
        <end position="225"/>
    </location>
</feature>
<feature type="strand" evidence="9">
    <location>
        <begin position="229"/>
        <end position="231"/>
    </location>
</feature>
<feature type="strand" evidence="10">
    <location>
        <begin position="234"/>
        <end position="237"/>
    </location>
</feature>
<feature type="strand" evidence="9">
    <location>
        <begin position="239"/>
        <end position="241"/>
    </location>
</feature>
<feature type="strand" evidence="12">
    <location>
        <begin position="242"/>
        <end position="246"/>
    </location>
</feature>
<feature type="strand" evidence="12">
    <location>
        <begin position="252"/>
        <end position="254"/>
    </location>
</feature>
<feature type="strand" evidence="12">
    <location>
        <begin position="260"/>
        <end position="274"/>
    </location>
</feature>
<feature type="strand" evidence="12">
    <location>
        <begin position="279"/>
        <end position="281"/>
    </location>
</feature>
<feature type="strand" evidence="12">
    <location>
        <begin position="286"/>
        <end position="288"/>
    </location>
</feature>
<feature type="strand" evidence="11">
    <location>
        <begin position="295"/>
        <end position="298"/>
    </location>
</feature>
<feature type="strand" evidence="11">
    <location>
        <begin position="300"/>
        <end position="304"/>
    </location>
</feature>
<feature type="strand" evidence="13">
    <location>
        <begin position="318"/>
        <end position="320"/>
    </location>
</feature>
<feature type="strand" evidence="12">
    <location>
        <begin position="321"/>
        <end position="327"/>
    </location>
</feature>
<feature type="strand" evidence="12">
    <location>
        <begin position="344"/>
        <end position="350"/>
    </location>
</feature>
<feature type="strand" evidence="12">
    <location>
        <begin position="362"/>
        <end position="366"/>
    </location>
</feature>
<feature type="turn" evidence="12">
    <location>
        <begin position="367"/>
        <end position="370"/>
    </location>
</feature>
<feature type="strand" evidence="12">
    <location>
        <begin position="371"/>
        <end position="375"/>
    </location>
</feature>
<feature type="strand" evidence="12">
    <location>
        <begin position="377"/>
        <end position="384"/>
    </location>
</feature>
<feature type="turn" evidence="12">
    <location>
        <begin position="385"/>
        <end position="388"/>
    </location>
</feature>
<feature type="strand" evidence="12">
    <location>
        <begin position="389"/>
        <end position="395"/>
    </location>
</feature>
<feature type="strand" evidence="10">
    <location>
        <begin position="397"/>
        <end position="399"/>
    </location>
</feature>
<feature type="strand" evidence="12">
    <location>
        <begin position="402"/>
        <end position="406"/>
    </location>
</feature>
<feature type="strand" evidence="12">
    <location>
        <begin position="409"/>
        <end position="412"/>
    </location>
</feature>
<feature type="strand" evidence="12">
    <location>
        <begin position="415"/>
        <end position="420"/>
    </location>
</feature>
<feature type="strand" evidence="10">
    <location>
        <begin position="422"/>
        <end position="425"/>
    </location>
</feature>
<feature type="strand" evidence="12">
    <location>
        <begin position="429"/>
        <end position="433"/>
    </location>
</feature>
<feature type="strand" evidence="13">
    <location>
        <begin position="439"/>
        <end position="441"/>
    </location>
</feature>
<feature type="strand" evidence="12">
    <location>
        <begin position="449"/>
        <end position="457"/>
    </location>
</feature>
<feature type="strand" evidence="12">
    <location>
        <begin position="462"/>
        <end position="474"/>
    </location>
</feature>
<feature type="strand" evidence="12">
    <location>
        <begin position="476"/>
        <end position="483"/>
    </location>
</feature>
<feature type="turn" evidence="10">
    <location>
        <begin position="485"/>
        <end position="487"/>
    </location>
</feature>
<feature type="strand" evidence="12">
    <location>
        <begin position="490"/>
        <end position="495"/>
    </location>
</feature>
<feature type="strand" evidence="12">
    <location>
        <begin position="501"/>
        <end position="505"/>
    </location>
</feature>
<feature type="strand" evidence="12">
    <location>
        <begin position="534"/>
        <end position="538"/>
    </location>
</feature>
<feature type="strand" evidence="12">
    <location>
        <begin position="547"/>
        <end position="553"/>
    </location>
</feature>
<feature type="helix" evidence="12">
    <location>
        <begin position="572"/>
        <end position="575"/>
    </location>
</feature>
<feature type="strand" evidence="13">
    <location>
        <begin position="576"/>
        <end position="579"/>
    </location>
</feature>
<feature type="helix" evidence="10">
    <location>
        <begin position="583"/>
        <end position="585"/>
    </location>
</feature>
<feature type="helix" evidence="12">
    <location>
        <begin position="586"/>
        <end position="611"/>
    </location>
</feature>
<feature type="turn" evidence="9">
    <location>
        <begin position="613"/>
        <end position="615"/>
    </location>
</feature>
<feature type="helix" evidence="12">
    <location>
        <begin position="617"/>
        <end position="638"/>
    </location>
</feature>
<feature type="turn" evidence="12">
    <location>
        <begin position="639"/>
        <end position="644"/>
    </location>
</feature>
<feature type="helix" evidence="10">
    <location>
        <begin position="645"/>
        <end position="647"/>
    </location>
</feature>
<feature type="strand" evidence="10">
    <location>
        <begin position="657"/>
        <end position="659"/>
    </location>
</feature>
<feature type="strand" evidence="12">
    <location>
        <begin position="664"/>
        <end position="668"/>
    </location>
</feature>
<feature type="helix" evidence="12">
    <location>
        <begin position="672"/>
        <end position="684"/>
    </location>
</feature>
<feature type="strand" evidence="12">
    <location>
        <begin position="688"/>
        <end position="690"/>
    </location>
</feature>
<feature type="turn" evidence="12">
    <location>
        <begin position="697"/>
        <end position="699"/>
    </location>
</feature>
<feature type="helix" evidence="12">
    <location>
        <begin position="700"/>
        <end position="702"/>
    </location>
</feature>
<feature type="turn" evidence="12">
    <location>
        <begin position="703"/>
        <end position="705"/>
    </location>
</feature>
<feature type="helix" evidence="12">
    <location>
        <begin position="712"/>
        <end position="719"/>
    </location>
</feature>
<feature type="turn" evidence="11">
    <location>
        <begin position="723"/>
        <end position="725"/>
    </location>
</feature>
<feature type="strand" evidence="12">
    <location>
        <begin position="726"/>
        <end position="728"/>
    </location>
</feature>
<feature type="helix" evidence="12">
    <location>
        <begin position="731"/>
        <end position="743"/>
    </location>
</feature>
<feature type="helix" evidence="12">
    <location>
        <begin position="753"/>
        <end position="765"/>
    </location>
</feature>
<feature type="helix" evidence="11">
    <location>
        <begin position="768"/>
        <end position="772"/>
    </location>
</feature>
<sequence length="894" mass="102049">MSEGQIPSSDVLGSQLGVGVQGASLYCPQENYTTKKQEKPQWLRPVDDTLAEDALDLHIVVKSLLCDTAIRYISDDKVLQESDADDDLITSDIDEDTDNQGDTSIVVNPVIPVVPKDVHFFKKVDVGNDSMFGVNCDTPVSFQDYIPSDLLRNLDDTLQESTNSSRPMQDAFFWDPTVANRLDSQYIQTASDLRNYRDGTEIIAYASGKTGSVLNIAVLTRQNTLHLNRHNNVTSIELHSPIKSIKIPGASESIGRRSNLVGIITENSFQIFRIESVHSRSCDVMVSSSEPLYFVEIDDLQVVDFAFNPWDLQQFAIIDIKGNWSIGRIPKNFNNNNKRKLQLIDNLHGTIFDPEELSSWKRIEWFSHFQKILVFDRSKMIEIDFMNNWQTEVVQAKAWSNIRDYKRIDDKNGILLTSREIIIVGASESNDPVRRISWKHDLDPDDTTLRITVQKVKKPDHILLVAFVYSMRHKRIYMHVFSHRKANLFQSLGCSTVLEIPGGTPTGIETILTLDHIDDESRREEDADENFELVVDFLVKLRNSSEVYYYALSNTQNSEPNKQETPIIVDHPEWASLFNNADEREKESIGALVSQIKLKERERISRVQNLIEHENSHDEDKYLQDLGYRLSIATNELLESWQKTKDESILSGSLSHSKLKNLLENSDSFASIPEFSSLLDQFFQYYQDQDVTFIGFEKLLHLFLHEDVPGLDIFYNKLLQCWVLVSPQAELLTKEIVKDIIWSLARLEKPSLFEPIQNEISRSLSGPYQDIISSWDMDDINEEDESNEFNFDSQFSAPFNGRPPFNLNSQSQIPTIKSSQSSGLARRKRILKTQSQKATPLSQSTQNLSVLPDSMTPAFTLMQPPSSQISFVNDSQPRNSQKAKKKKKRIRGFG</sequence>
<keyword id="KW-0002">3D-structure</keyword>
<keyword id="KW-0963">Cytoplasm</keyword>
<keyword id="KW-0539">Nucleus</keyword>
<keyword id="KW-1185">Reference proteome</keyword>
<keyword id="KW-0804">Transcription</keyword>
<keyword id="KW-0805">Transcription regulation</keyword>
<accession>P32786</accession>
<accession>D6VPY6</accession>
<gene>
    <name type="primary">RRN6</name>
    <name type="ordered locus">YBL014C</name>
    <name type="ORF">YBL0311</name>
    <name type="ORF">YBL0312</name>
</gene>
<comment type="function">
    <text evidence="6">Acts as a component of the core factor (CF) complex which is essential for the initiation of rDNA transcription by RNA polymerase I. After binding of UAF (upstream activation factor) to an upstream element of the promoter, CF is recruited in a SPT15/TBP-dependent manner to form a preinitiation complex.</text>
</comment>
<comment type="subunit">
    <text evidence="4 5 7">Component of the core factor (CF) complex, which consists of RRN6, RRN7 and RRN11. The CF heterotrimer may further dimerize to form a hexamer. RRN6 interacts with RRN7, RRN11 and RRN9.</text>
</comment>
<comment type="interaction">
    <interactant intactId="EBI-15986">
        <id>P32786</id>
    </interactant>
    <interactant intactId="EBI-27790">
        <id>Q04712</id>
        <label>RRN11</label>
    </interactant>
    <organismsDiffer>false</organismsDiffer>
    <experiments>3</experiments>
</comment>
<comment type="interaction">
    <interactant intactId="EBI-15986">
        <id>P32786</id>
    </interactant>
    <interactant intactId="EBI-15990">
        <id>P40992</id>
        <label>RRN7</label>
    </interactant>
    <organismsDiffer>false</organismsDiffer>
    <experiments>5</experiments>
</comment>
<comment type="subcellular location">
    <subcellularLocation>
        <location evidence="2">Cytoplasm</location>
    </subcellularLocation>
    <subcellularLocation>
        <location evidence="2">Nucleus</location>
        <location evidence="2">Nucleolus</location>
    </subcellularLocation>
</comment>
<comment type="miscellaneous">
    <text evidence="3">Present with 237 molecules/cell in log phase SD medium.</text>
</comment>
<proteinExistence type="evidence at protein level"/>
<reference key="1">
    <citation type="journal article" date="1994" name="Genes Dev.">
        <title>RRN6 and RRN7 encode subunits of a multiprotein complex essential for the initiation of rDNA transcription by RNA polymerase I in Saccharomyces cerevisiae.</title>
        <authorList>
            <person name="Keys D.A."/>
            <person name="Vu L."/>
            <person name="Steffan J.S."/>
            <person name="Dodd J.A."/>
            <person name="Yamamoto R.T."/>
            <person name="Nogi Y."/>
            <person name="Nomura M."/>
        </authorList>
    </citation>
    <scope>NUCLEOTIDE SEQUENCE [GENOMIC DNA]</scope>
    <scope>IDENTIFICATION IN THE CF COMPLEX</scope>
</reference>
<reference key="2">
    <citation type="journal article" date="1992" name="Yeast">
        <title>The sequence of an 8 kb segment on the left arm of chromosome II from Saccharomyces cerevisiae identifies five new open reading frames of unknown functions, two tRNA genes and two transposable elements.</title>
        <authorList>
            <person name="Skala J."/>
            <person name="van Dyck L."/>
            <person name="Purnelle B."/>
            <person name="Goffeau A."/>
        </authorList>
    </citation>
    <scope>NUCLEOTIDE SEQUENCE [GENOMIC DNA]</scope>
    <source>
        <strain>ATCC 204508 / S288c</strain>
    </source>
</reference>
<reference key="3">
    <citation type="journal article" date="1994" name="EMBO J.">
        <title>Complete DNA sequence of yeast chromosome II.</title>
        <authorList>
            <person name="Feldmann H."/>
            <person name="Aigle M."/>
            <person name="Aljinovic G."/>
            <person name="Andre B."/>
            <person name="Baclet M.C."/>
            <person name="Barthe C."/>
            <person name="Baur A."/>
            <person name="Becam A.-M."/>
            <person name="Biteau N."/>
            <person name="Boles E."/>
            <person name="Brandt T."/>
            <person name="Brendel M."/>
            <person name="Brueckner M."/>
            <person name="Bussereau F."/>
            <person name="Christiansen C."/>
            <person name="Contreras R."/>
            <person name="Crouzet M."/>
            <person name="Cziepluch C."/>
            <person name="Demolis N."/>
            <person name="Delaveau T."/>
            <person name="Doignon F."/>
            <person name="Domdey H."/>
            <person name="Duesterhus S."/>
            <person name="Dubois E."/>
            <person name="Dujon B."/>
            <person name="El Bakkoury M."/>
            <person name="Entian K.-D."/>
            <person name="Feuermann M."/>
            <person name="Fiers W."/>
            <person name="Fobo G.M."/>
            <person name="Fritz C."/>
            <person name="Gassenhuber J."/>
            <person name="Glansdorff N."/>
            <person name="Goffeau A."/>
            <person name="Grivell L.A."/>
            <person name="de Haan M."/>
            <person name="Hein C."/>
            <person name="Herbert C.J."/>
            <person name="Hollenberg C.P."/>
            <person name="Holmstroem K."/>
            <person name="Jacq C."/>
            <person name="Jacquet M."/>
            <person name="Jauniaux J.-C."/>
            <person name="Jonniaux J.-L."/>
            <person name="Kallesoee T."/>
            <person name="Kiesau P."/>
            <person name="Kirchrath L."/>
            <person name="Koetter P."/>
            <person name="Korol S."/>
            <person name="Liebl S."/>
            <person name="Logghe M."/>
            <person name="Lohan A.J.E."/>
            <person name="Louis E.J."/>
            <person name="Li Z.Y."/>
            <person name="Maat M.J."/>
            <person name="Mallet L."/>
            <person name="Mannhaupt G."/>
            <person name="Messenguy F."/>
            <person name="Miosga T."/>
            <person name="Molemans F."/>
            <person name="Mueller S."/>
            <person name="Nasr F."/>
            <person name="Obermaier B."/>
            <person name="Perea J."/>
            <person name="Pierard A."/>
            <person name="Piravandi E."/>
            <person name="Pohl F.M."/>
            <person name="Pohl T.M."/>
            <person name="Potier S."/>
            <person name="Proft M."/>
            <person name="Purnelle B."/>
            <person name="Ramezani Rad M."/>
            <person name="Rieger M."/>
            <person name="Rose M."/>
            <person name="Schaaff-Gerstenschlaeger I."/>
            <person name="Scherens B."/>
            <person name="Schwarzlose C."/>
            <person name="Skala J."/>
            <person name="Slonimski P.P."/>
            <person name="Smits P.H.M."/>
            <person name="Souciet J.-L."/>
            <person name="Steensma H.Y."/>
            <person name="Stucka R."/>
            <person name="Urrestarazu L.A."/>
            <person name="van der Aart Q.J.M."/>
            <person name="Van Dyck L."/>
            <person name="Vassarotti A."/>
            <person name="Vetter I."/>
            <person name="Vierendeels F."/>
            <person name="Vissers S."/>
            <person name="Wagner G."/>
            <person name="de Wergifosse P."/>
            <person name="Wolfe K.H."/>
            <person name="Zagulski M."/>
            <person name="Zimmermann F.K."/>
            <person name="Mewes H.-W."/>
            <person name="Kleine K."/>
        </authorList>
    </citation>
    <scope>NUCLEOTIDE SEQUENCE [LARGE SCALE GENOMIC DNA]</scope>
    <source>
        <strain>ATCC 204508 / S288c</strain>
    </source>
</reference>
<reference key="4">
    <citation type="journal article" date="2014" name="G3 (Bethesda)">
        <title>The reference genome sequence of Saccharomyces cerevisiae: Then and now.</title>
        <authorList>
            <person name="Engel S.R."/>
            <person name="Dietrich F.S."/>
            <person name="Fisk D.G."/>
            <person name="Binkley G."/>
            <person name="Balakrishnan R."/>
            <person name="Costanzo M.C."/>
            <person name="Dwight S.S."/>
            <person name="Hitz B.C."/>
            <person name="Karra K."/>
            <person name="Nash R.S."/>
            <person name="Weng S."/>
            <person name="Wong E.D."/>
            <person name="Lloyd P."/>
            <person name="Skrzypek M.S."/>
            <person name="Miyasato S.R."/>
            <person name="Simison M."/>
            <person name="Cherry J.M."/>
        </authorList>
    </citation>
    <scope>GENOME REANNOTATION</scope>
    <scope>SEQUENCE REVISION TO 39</scope>
    <source>
        <strain>ATCC 204508 / S288c</strain>
    </source>
</reference>
<reference key="5">
    <citation type="journal article" date="1996" name="Genes Dev.">
        <title>The role of TBP in rDNA transcription by RNA polymerase I in Saccharomyces cerevisiae: TBP is required for upstream activation factor-dependent recruitment of core factor.</title>
        <authorList>
            <person name="Steffan J.S."/>
            <person name="Keys D.A."/>
            <person name="Dodd J.A."/>
            <person name="Nomura M."/>
        </authorList>
    </citation>
    <scope>INTERACTION WITH RRN6</scope>
</reference>
<reference key="6">
    <citation type="journal article" date="1996" name="J. Biol. Chem.">
        <title>RRN11 encodes the third subunit of the complex containing Rrn6p and Rrn7p that is essential for the initiation of rDNA transcription by yeast RNA polymerase I.</title>
        <authorList>
            <person name="Lalo D."/>
            <person name="Steffan J.S."/>
            <person name="Dodd J.A."/>
            <person name="Nomura M."/>
        </authorList>
    </citation>
    <scope>INTERACTION WITH RRN7 AND RRN11</scope>
</reference>
<reference key="7">
    <citation type="journal article" date="1996" name="Mol. Cell. Biol.">
        <title>A novel 66-kilodalton protein complexes with Rrn6, Rrn7, and TATA-binding protein to promote polymerase I transcription initiation in Saccharomyces cerevisiae.</title>
        <authorList>
            <person name="Lin C.W."/>
            <person name="Moorefield B."/>
            <person name="Payne J."/>
            <person name="Aprikian P."/>
            <person name="Mitomo K."/>
            <person name="Reeder R.H."/>
        </authorList>
    </citation>
    <scope>FUNCTION OF THE CF COMPLEX</scope>
</reference>
<reference key="8">
    <citation type="journal article" date="2003" name="Nature">
        <title>Global analysis of protein localization in budding yeast.</title>
        <authorList>
            <person name="Huh W.-K."/>
            <person name="Falvo J.V."/>
            <person name="Gerke L.C."/>
            <person name="Carroll A.S."/>
            <person name="Howson R.W."/>
            <person name="Weissman J.S."/>
            <person name="O'Shea E.K."/>
        </authorList>
    </citation>
    <scope>SUBCELLULAR LOCATION [LARGE SCALE ANALYSIS]</scope>
</reference>
<reference key="9">
    <citation type="journal article" date="2003" name="Nature">
        <title>Global analysis of protein expression in yeast.</title>
        <authorList>
            <person name="Ghaemmaghami S."/>
            <person name="Huh W.-K."/>
            <person name="Bower K."/>
            <person name="Howson R.W."/>
            <person name="Belle A."/>
            <person name="Dephoure N."/>
            <person name="O'Shea E.K."/>
            <person name="Weissman J.S."/>
        </authorList>
    </citation>
    <scope>LEVEL OF PROTEIN EXPRESSION [LARGE SCALE ANALYSIS]</scope>
</reference>
<name>RRN6_YEAST</name>
<organism>
    <name type="scientific">Saccharomyces cerevisiae (strain ATCC 204508 / S288c)</name>
    <name type="common">Baker's yeast</name>
    <dbReference type="NCBI Taxonomy" id="559292"/>
    <lineage>
        <taxon>Eukaryota</taxon>
        <taxon>Fungi</taxon>
        <taxon>Dikarya</taxon>
        <taxon>Ascomycota</taxon>
        <taxon>Saccharomycotina</taxon>
        <taxon>Saccharomycetes</taxon>
        <taxon>Saccharomycetales</taxon>
        <taxon>Saccharomycetaceae</taxon>
        <taxon>Saccharomyces</taxon>
    </lineage>
</organism>